<organism>
    <name type="scientific">Escherichia coli (strain K12)</name>
    <dbReference type="NCBI Taxonomy" id="83333"/>
    <lineage>
        <taxon>Bacteria</taxon>
        <taxon>Pseudomonadati</taxon>
        <taxon>Pseudomonadota</taxon>
        <taxon>Gammaproteobacteria</taxon>
        <taxon>Enterobacterales</taxon>
        <taxon>Enterobacteriaceae</taxon>
        <taxon>Escherichia</taxon>
    </lineage>
</organism>
<reference key="1">
    <citation type="journal article" date="1997" name="Science">
        <title>The complete genome sequence of Escherichia coli K-12.</title>
        <authorList>
            <person name="Blattner F.R."/>
            <person name="Plunkett G. III"/>
            <person name="Bloch C.A."/>
            <person name="Perna N.T."/>
            <person name="Burland V."/>
            <person name="Riley M."/>
            <person name="Collado-Vides J."/>
            <person name="Glasner J.D."/>
            <person name="Rode C.K."/>
            <person name="Mayhew G.F."/>
            <person name="Gregor J."/>
            <person name="Davis N.W."/>
            <person name="Kirkpatrick H.A."/>
            <person name="Goeden M.A."/>
            <person name="Rose D.J."/>
            <person name="Mau B."/>
            <person name="Shao Y."/>
        </authorList>
    </citation>
    <scope>NUCLEOTIDE SEQUENCE [LARGE SCALE GENOMIC DNA]</scope>
    <source>
        <strain>K12 / MG1655 / ATCC 47076</strain>
    </source>
</reference>
<reference key="2">
    <citation type="journal article" date="2006" name="Mol. Syst. Biol.">
        <title>Highly accurate genome sequences of Escherichia coli K-12 strains MG1655 and W3110.</title>
        <authorList>
            <person name="Hayashi K."/>
            <person name="Morooka N."/>
            <person name="Yamamoto Y."/>
            <person name="Fujita K."/>
            <person name="Isono K."/>
            <person name="Choi S."/>
            <person name="Ohtsubo E."/>
            <person name="Baba T."/>
            <person name="Wanner B.L."/>
            <person name="Mori H."/>
            <person name="Horiuchi T."/>
        </authorList>
    </citation>
    <scope>NUCLEOTIDE SEQUENCE [LARGE SCALE GENOMIC DNA]</scope>
    <source>
        <strain>K12 / W3110 / ATCC 27325 / DSM 5911</strain>
    </source>
</reference>
<reference key="3">
    <citation type="journal article" date="2005" name="Science">
        <title>Global topology analysis of the Escherichia coli inner membrane proteome.</title>
        <authorList>
            <person name="Daley D.O."/>
            <person name="Rapp M."/>
            <person name="Granseth E."/>
            <person name="Melen K."/>
            <person name="Drew D."/>
            <person name="von Heijne G."/>
        </authorList>
    </citation>
    <scope>TOPOLOGY [LARGE SCALE ANALYSIS]</scope>
    <source>
        <strain>K12 / MG1655 / ATCC 47076</strain>
    </source>
</reference>
<comment type="subcellular location">
    <subcellularLocation>
        <location>Cell inner membrane</location>
        <topology>Multi-pass membrane protein</topology>
    </subcellularLocation>
</comment>
<comment type="similarity">
    <text evidence="2">To Synechocystis PCC 6803 sll0481.</text>
</comment>
<dbReference type="EMBL" id="U00096">
    <property type="protein sequence ID" value="AAC74698.2"/>
    <property type="molecule type" value="Genomic_DNA"/>
</dbReference>
<dbReference type="EMBL" id="AP009048">
    <property type="protein sequence ID" value="BAE76485.1"/>
    <property type="molecule type" value="Genomic_DNA"/>
</dbReference>
<dbReference type="PIR" id="D64919">
    <property type="entry name" value="D64919"/>
</dbReference>
<dbReference type="RefSeq" id="NP_416143.2">
    <property type="nucleotide sequence ID" value="NC_000913.3"/>
</dbReference>
<dbReference type="RefSeq" id="WP_001310854.1">
    <property type="nucleotide sequence ID" value="NZ_SSZK01000001.1"/>
</dbReference>
<dbReference type="SMR" id="P76180"/>
<dbReference type="BioGRID" id="4259633">
    <property type="interactions" value="49"/>
</dbReference>
<dbReference type="BioGRID" id="850514">
    <property type="interactions" value="1"/>
</dbReference>
<dbReference type="FunCoup" id="P76180">
    <property type="interactions" value="9"/>
</dbReference>
<dbReference type="IntAct" id="P76180">
    <property type="interactions" value="1"/>
</dbReference>
<dbReference type="STRING" id="511145.b1626"/>
<dbReference type="PaxDb" id="511145-b1626"/>
<dbReference type="EnsemblBacteria" id="AAC74698">
    <property type="protein sequence ID" value="AAC74698"/>
    <property type="gene ID" value="b1626"/>
</dbReference>
<dbReference type="GeneID" id="946154"/>
<dbReference type="KEGG" id="ecj:JW1618"/>
<dbReference type="KEGG" id="eco:b1626"/>
<dbReference type="KEGG" id="ecoc:C3026_09345"/>
<dbReference type="PATRIC" id="fig|1411691.4.peg.635"/>
<dbReference type="EchoBASE" id="EB3691"/>
<dbReference type="eggNOG" id="ENOG502ZZZI">
    <property type="taxonomic scope" value="Bacteria"/>
</dbReference>
<dbReference type="HOGENOM" id="CLU_147992_0_0_6"/>
<dbReference type="InParanoid" id="P76180"/>
<dbReference type="OMA" id="MWCFTLW"/>
<dbReference type="OrthoDB" id="6504677at2"/>
<dbReference type="PhylomeDB" id="P76180"/>
<dbReference type="BioCyc" id="EcoCyc:G6870-MONOMER"/>
<dbReference type="PRO" id="PR:P76180"/>
<dbReference type="Proteomes" id="UP000000625">
    <property type="component" value="Chromosome"/>
</dbReference>
<dbReference type="GO" id="GO:0005886">
    <property type="term" value="C:plasma membrane"/>
    <property type="evidence" value="ECO:0000314"/>
    <property type="project" value="EcoCyc"/>
</dbReference>
<dbReference type="InterPro" id="IPR019690">
    <property type="entry name" value="DUF2569"/>
</dbReference>
<dbReference type="Pfam" id="PF10754">
    <property type="entry name" value="DUF2569"/>
    <property type="match status" value="1"/>
</dbReference>
<keyword id="KW-0997">Cell inner membrane</keyword>
<keyword id="KW-1003">Cell membrane</keyword>
<keyword id="KW-0472">Membrane</keyword>
<keyword id="KW-1185">Reference proteome</keyword>
<keyword id="KW-0812">Transmembrane</keyword>
<keyword id="KW-1133">Transmembrane helix</keyword>
<feature type="chain" id="PRO_0000168973" description="Inner membrane protein YdgK">
    <location>
        <begin position="1"/>
        <end position="146"/>
    </location>
</feature>
<feature type="topological domain" description="Cytoplasmic" evidence="1">
    <location>
        <begin position="1"/>
        <end position="12"/>
    </location>
</feature>
<feature type="transmembrane region" description="Helical" evidence="1">
    <location>
        <begin position="13"/>
        <end position="33"/>
    </location>
</feature>
<feature type="topological domain" description="Periplasmic" evidence="1">
    <location>
        <begin position="34"/>
        <end position="59"/>
    </location>
</feature>
<feature type="transmembrane region" description="Helical" evidence="1">
    <location>
        <begin position="60"/>
        <end position="80"/>
    </location>
</feature>
<feature type="topological domain" description="Cytoplasmic" evidence="1">
    <location>
        <begin position="81"/>
        <end position="89"/>
    </location>
</feature>
<feature type="transmembrane region" description="Helical" evidence="1">
    <location>
        <begin position="90"/>
        <end position="110"/>
    </location>
</feature>
<feature type="topological domain" description="Periplasmic" evidence="1">
    <location>
        <begin position="111"/>
        <end position="112"/>
    </location>
</feature>
<feature type="transmembrane region" description="Helical" evidence="1">
    <location>
        <begin position="113"/>
        <end position="133"/>
    </location>
</feature>
<feature type="topological domain" description="Cytoplasmic" evidence="1">
    <location>
        <begin position="134"/>
        <end position="146"/>
    </location>
</feature>
<gene>
    <name type="primary">ydgK</name>
    <name type="ordered locus">b1626</name>
    <name type="ordered locus">JW1618</name>
</gene>
<protein>
    <recommendedName>
        <fullName>Inner membrane protein YdgK</fullName>
    </recommendedName>
</protein>
<sequence length="146" mass="16319">MTTTTPQRIGGWLLGPLAWLLVALLSTTLALLLYTAALSSPQTFQTLGGQALTTQILWGVSFITAIALWYYTLWLTIAFFKRRRCVPKHYIIWLLISVLLAVKAFAFSPVEDGIAVRQLLFTLLATALIVPYFKRSSRVKATFVNP</sequence>
<proteinExistence type="evidence at protein level"/>
<evidence type="ECO:0000255" key="1"/>
<evidence type="ECO:0000305" key="2"/>
<name>YDGK_ECOLI</name>
<accession>P76180</accession>
<accession>Q2MB71</accession>